<protein>
    <recommendedName>
        <fullName evidence="1">Glutamine--fructose-6-phosphate aminotransferase [isomerizing]</fullName>
        <ecNumber evidence="1">2.6.1.16</ecNumber>
    </recommendedName>
    <alternativeName>
        <fullName evidence="1">D-fructose-6-phosphate amidotransferase</fullName>
    </alternativeName>
    <alternativeName>
        <fullName evidence="1">GFAT</fullName>
    </alternativeName>
    <alternativeName>
        <fullName evidence="1">Glucosamine-6-phosphate synthase</fullName>
    </alternativeName>
    <alternativeName>
        <fullName evidence="1">Hexosephosphate aminotransferase</fullName>
    </alternativeName>
    <alternativeName>
        <fullName evidence="1">L-glutamine--D-fructose-6-phosphate amidotransferase</fullName>
    </alternativeName>
</protein>
<accession>Q88BX8</accession>
<proteinExistence type="inferred from homology"/>
<reference key="1">
    <citation type="journal article" date="2002" name="Environ. Microbiol.">
        <title>Complete genome sequence and comparative analysis of the metabolically versatile Pseudomonas putida KT2440.</title>
        <authorList>
            <person name="Nelson K.E."/>
            <person name="Weinel C."/>
            <person name="Paulsen I.T."/>
            <person name="Dodson R.J."/>
            <person name="Hilbert H."/>
            <person name="Martins dos Santos V.A.P."/>
            <person name="Fouts D.E."/>
            <person name="Gill S.R."/>
            <person name="Pop M."/>
            <person name="Holmes M."/>
            <person name="Brinkac L.M."/>
            <person name="Beanan M.J."/>
            <person name="DeBoy R.T."/>
            <person name="Daugherty S.C."/>
            <person name="Kolonay J.F."/>
            <person name="Madupu R."/>
            <person name="Nelson W.C."/>
            <person name="White O."/>
            <person name="Peterson J.D."/>
            <person name="Khouri H.M."/>
            <person name="Hance I."/>
            <person name="Chris Lee P."/>
            <person name="Holtzapple E.K."/>
            <person name="Scanlan D."/>
            <person name="Tran K."/>
            <person name="Moazzez A."/>
            <person name="Utterback T.R."/>
            <person name="Rizzo M."/>
            <person name="Lee K."/>
            <person name="Kosack D."/>
            <person name="Moestl D."/>
            <person name="Wedler H."/>
            <person name="Lauber J."/>
            <person name="Stjepandic D."/>
            <person name="Hoheisel J."/>
            <person name="Straetz M."/>
            <person name="Heim S."/>
            <person name="Kiewitz C."/>
            <person name="Eisen J.A."/>
            <person name="Timmis K.N."/>
            <person name="Duesterhoeft A."/>
            <person name="Tuemmler B."/>
            <person name="Fraser C.M."/>
        </authorList>
    </citation>
    <scope>NUCLEOTIDE SEQUENCE [LARGE SCALE GENOMIC DNA]</scope>
    <source>
        <strain>ATCC 47054 / DSM 6125 / CFBP 8728 / NCIMB 11950 / KT2440</strain>
    </source>
</reference>
<organism>
    <name type="scientific">Pseudomonas putida (strain ATCC 47054 / DSM 6125 / CFBP 8728 / NCIMB 11950 / KT2440)</name>
    <dbReference type="NCBI Taxonomy" id="160488"/>
    <lineage>
        <taxon>Bacteria</taxon>
        <taxon>Pseudomonadati</taxon>
        <taxon>Pseudomonadota</taxon>
        <taxon>Gammaproteobacteria</taxon>
        <taxon>Pseudomonadales</taxon>
        <taxon>Pseudomonadaceae</taxon>
        <taxon>Pseudomonas</taxon>
    </lineage>
</organism>
<feature type="initiator methionine" description="Removed" evidence="1">
    <location>
        <position position="1"/>
    </location>
</feature>
<feature type="chain" id="PRO_0000135368" description="Glutamine--fructose-6-phosphate aminotransferase [isomerizing]">
    <location>
        <begin position="2"/>
        <end position="611"/>
    </location>
</feature>
<feature type="domain" description="Glutamine amidotransferase type-2" evidence="1">
    <location>
        <begin position="2"/>
        <end position="219"/>
    </location>
</feature>
<feature type="domain" description="SIS 1" evidence="1">
    <location>
        <begin position="287"/>
        <end position="427"/>
    </location>
</feature>
<feature type="domain" description="SIS 2" evidence="1">
    <location>
        <begin position="460"/>
        <end position="601"/>
    </location>
</feature>
<feature type="active site" description="Nucleophile; for GATase activity" evidence="1">
    <location>
        <position position="2"/>
    </location>
</feature>
<feature type="active site" description="For Fru-6P isomerization activity" evidence="1">
    <location>
        <position position="606"/>
    </location>
</feature>
<keyword id="KW-0032">Aminotransferase</keyword>
<keyword id="KW-0963">Cytoplasm</keyword>
<keyword id="KW-0315">Glutamine amidotransferase</keyword>
<keyword id="KW-1185">Reference proteome</keyword>
<keyword id="KW-0677">Repeat</keyword>
<keyword id="KW-0808">Transferase</keyword>
<gene>
    <name evidence="1" type="primary">glmS</name>
    <name type="ordered locus">PP_5409</name>
</gene>
<dbReference type="EC" id="2.6.1.16" evidence="1"/>
<dbReference type="EMBL" id="AE015451">
    <property type="protein sequence ID" value="AAN70973.1"/>
    <property type="molecule type" value="Genomic_DNA"/>
</dbReference>
<dbReference type="RefSeq" id="NP_747509.1">
    <property type="nucleotide sequence ID" value="NC_002947.4"/>
</dbReference>
<dbReference type="RefSeq" id="WP_010955884.1">
    <property type="nucleotide sequence ID" value="NZ_CP169744.1"/>
</dbReference>
<dbReference type="SMR" id="Q88BX8"/>
<dbReference type="STRING" id="160488.PP_5409"/>
<dbReference type="PaxDb" id="160488-PP_5409"/>
<dbReference type="GeneID" id="83683222"/>
<dbReference type="KEGG" id="ppu:PP_5409"/>
<dbReference type="PATRIC" id="fig|160488.4.peg.5776"/>
<dbReference type="eggNOG" id="COG0449">
    <property type="taxonomic scope" value="Bacteria"/>
</dbReference>
<dbReference type="HOGENOM" id="CLU_012520_5_2_6"/>
<dbReference type="OrthoDB" id="9761808at2"/>
<dbReference type="PhylomeDB" id="Q88BX8"/>
<dbReference type="BioCyc" id="PPUT160488:G1G01-5775-MONOMER"/>
<dbReference type="Proteomes" id="UP000000556">
    <property type="component" value="Chromosome"/>
</dbReference>
<dbReference type="GO" id="GO:0005829">
    <property type="term" value="C:cytosol"/>
    <property type="evidence" value="ECO:0007669"/>
    <property type="project" value="TreeGrafter"/>
</dbReference>
<dbReference type="GO" id="GO:0097367">
    <property type="term" value="F:carbohydrate derivative binding"/>
    <property type="evidence" value="ECO:0007669"/>
    <property type="project" value="InterPro"/>
</dbReference>
<dbReference type="GO" id="GO:0004360">
    <property type="term" value="F:glutamine-fructose-6-phosphate transaminase (isomerizing) activity"/>
    <property type="evidence" value="ECO:0007669"/>
    <property type="project" value="UniProtKB-UniRule"/>
</dbReference>
<dbReference type="GO" id="GO:0005975">
    <property type="term" value="P:carbohydrate metabolic process"/>
    <property type="evidence" value="ECO:0007669"/>
    <property type="project" value="UniProtKB-UniRule"/>
</dbReference>
<dbReference type="GO" id="GO:0006002">
    <property type="term" value="P:fructose 6-phosphate metabolic process"/>
    <property type="evidence" value="ECO:0007669"/>
    <property type="project" value="TreeGrafter"/>
</dbReference>
<dbReference type="GO" id="GO:0006487">
    <property type="term" value="P:protein N-linked glycosylation"/>
    <property type="evidence" value="ECO:0007669"/>
    <property type="project" value="TreeGrafter"/>
</dbReference>
<dbReference type="GO" id="GO:0006047">
    <property type="term" value="P:UDP-N-acetylglucosamine metabolic process"/>
    <property type="evidence" value="ECO:0007669"/>
    <property type="project" value="TreeGrafter"/>
</dbReference>
<dbReference type="CDD" id="cd00714">
    <property type="entry name" value="GFAT"/>
    <property type="match status" value="1"/>
</dbReference>
<dbReference type="CDD" id="cd05008">
    <property type="entry name" value="SIS_GlmS_GlmD_1"/>
    <property type="match status" value="1"/>
</dbReference>
<dbReference type="CDD" id="cd05009">
    <property type="entry name" value="SIS_GlmS_GlmD_2"/>
    <property type="match status" value="1"/>
</dbReference>
<dbReference type="FunFam" id="3.40.50.10490:FF:000001">
    <property type="entry name" value="Glutamine--fructose-6-phosphate aminotransferase [isomerizing]"/>
    <property type="match status" value="1"/>
</dbReference>
<dbReference type="FunFam" id="3.40.50.10490:FF:000002">
    <property type="entry name" value="Glutamine--fructose-6-phosphate aminotransferase [isomerizing]"/>
    <property type="match status" value="1"/>
</dbReference>
<dbReference type="FunFam" id="3.60.20.10:FF:000006">
    <property type="entry name" value="Glutamine--fructose-6-phosphate aminotransferase [isomerizing]"/>
    <property type="match status" value="1"/>
</dbReference>
<dbReference type="Gene3D" id="3.40.50.10490">
    <property type="entry name" value="Glucose-6-phosphate isomerase like protein, domain 1"/>
    <property type="match status" value="2"/>
</dbReference>
<dbReference type="Gene3D" id="3.60.20.10">
    <property type="entry name" value="Glutamine Phosphoribosylpyrophosphate, subunit 1, domain 1"/>
    <property type="match status" value="1"/>
</dbReference>
<dbReference type="HAMAP" id="MF_00164">
    <property type="entry name" value="GlmS"/>
    <property type="match status" value="1"/>
</dbReference>
<dbReference type="InterPro" id="IPR017932">
    <property type="entry name" value="GATase_2_dom"/>
</dbReference>
<dbReference type="InterPro" id="IPR005855">
    <property type="entry name" value="GFAT"/>
</dbReference>
<dbReference type="InterPro" id="IPR047084">
    <property type="entry name" value="GFAT_N"/>
</dbReference>
<dbReference type="InterPro" id="IPR035466">
    <property type="entry name" value="GlmS/AgaS_SIS"/>
</dbReference>
<dbReference type="InterPro" id="IPR035490">
    <property type="entry name" value="GlmS/FrlB_SIS"/>
</dbReference>
<dbReference type="InterPro" id="IPR029055">
    <property type="entry name" value="Ntn_hydrolases_N"/>
</dbReference>
<dbReference type="InterPro" id="IPR001347">
    <property type="entry name" value="SIS_dom"/>
</dbReference>
<dbReference type="InterPro" id="IPR046348">
    <property type="entry name" value="SIS_dom_sf"/>
</dbReference>
<dbReference type="NCBIfam" id="TIGR01135">
    <property type="entry name" value="glmS"/>
    <property type="match status" value="1"/>
</dbReference>
<dbReference type="NCBIfam" id="NF001484">
    <property type="entry name" value="PRK00331.1"/>
    <property type="match status" value="1"/>
</dbReference>
<dbReference type="PANTHER" id="PTHR10937">
    <property type="entry name" value="GLUCOSAMINE--FRUCTOSE-6-PHOSPHATE AMINOTRANSFERASE, ISOMERIZING"/>
    <property type="match status" value="1"/>
</dbReference>
<dbReference type="PANTHER" id="PTHR10937:SF0">
    <property type="entry name" value="GLUTAMINE--FRUCTOSE-6-PHOSPHATE TRANSAMINASE (ISOMERIZING)"/>
    <property type="match status" value="1"/>
</dbReference>
<dbReference type="Pfam" id="PF13522">
    <property type="entry name" value="GATase_6"/>
    <property type="match status" value="1"/>
</dbReference>
<dbReference type="Pfam" id="PF01380">
    <property type="entry name" value="SIS"/>
    <property type="match status" value="2"/>
</dbReference>
<dbReference type="SUPFAM" id="SSF56235">
    <property type="entry name" value="N-terminal nucleophile aminohydrolases (Ntn hydrolases)"/>
    <property type="match status" value="1"/>
</dbReference>
<dbReference type="SUPFAM" id="SSF53697">
    <property type="entry name" value="SIS domain"/>
    <property type="match status" value="1"/>
</dbReference>
<dbReference type="PROSITE" id="PS51278">
    <property type="entry name" value="GATASE_TYPE_2"/>
    <property type="match status" value="1"/>
</dbReference>
<dbReference type="PROSITE" id="PS51464">
    <property type="entry name" value="SIS"/>
    <property type="match status" value="2"/>
</dbReference>
<name>GLMS_PSEPK</name>
<sequence length="611" mass="66313">MCGIVGAVAERNITAILIEGLKRLEYRGYDSAGLAVLTQNGELQRRRRIGKVSELEVAVADDPLAGQLGIAHTRWATHGAPTEGNAHPHFSGNDVAVVHNGIIENHEELREELKGLGYVFTSQTDTEVIVHLIHHTLKSIPDLTDALKAAVKRLHGAYGLALISAKQPDRLVAARSGSPLVIGLGLGENFLASDQLALRQVTDRFMYLEEGDIAEIRRDQVSIWDQQGNKVQRETVQYHEGAEAADKGAYRHFMLKEIHEQPSVVQRTLEGRLGKDNVLVQAFGPQAADLFAKVRNVQIVACGTSYHAGMVARYWLESLAGIPCQVEVASEFRYRKVVVQPDTLFVSISQSGETADTLAALRNAKELGFLGSLAICNVGISSLVRESDLTLLTLAGPEIGVASTKAFTTQLVSLMLLTLALGQVRGTLEAGVEAELVEELRRLPTRLGEALAMDATVEKIAELFADKHHTLFLGRGAQYPVAMEGALKLKEISYIHAEAYPAGELKHGPLALVDNDMPVVTVAPNNELLEKLKSNLQEVRARGGELVVFADEHAGMTNGEGTHVIKVPHIADALAPILYTIPLQLLSYYVAVLKGTDVDQPRNLAKSVTVE</sequence>
<comment type="function">
    <text evidence="1">Catalyzes the first step in hexosamine metabolism, converting fructose-6P into glucosamine-6P using glutamine as a nitrogen source.</text>
</comment>
<comment type="catalytic activity">
    <reaction evidence="1">
        <text>D-fructose 6-phosphate + L-glutamine = D-glucosamine 6-phosphate + L-glutamate</text>
        <dbReference type="Rhea" id="RHEA:13237"/>
        <dbReference type="ChEBI" id="CHEBI:29985"/>
        <dbReference type="ChEBI" id="CHEBI:58359"/>
        <dbReference type="ChEBI" id="CHEBI:58725"/>
        <dbReference type="ChEBI" id="CHEBI:61527"/>
        <dbReference type="EC" id="2.6.1.16"/>
    </reaction>
</comment>
<comment type="subunit">
    <text evidence="1">Homodimer.</text>
</comment>
<comment type="subcellular location">
    <subcellularLocation>
        <location evidence="1">Cytoplasm</location>
    </subcellularLocation>
</comment>
<evidence type="ECO:0000255" key="1">
    <source>
        <dbReference type="HAMAP-Rule" id="MF_00164"/>
    </source>
</evidence>